<accession>B4KA23</accession>
<keyword id="KW-0156">Chromatin regulator</keyword>
<keyword id="KW-0963">Cytoplasm</keyword>
<keyword id="KW-0488">Methylation</keyword>
<keyword id="KW-0489">Methyltransferase</keyword>
<keyword id="KW-0539">Nucleus</keyword>
<keyword id="KW-1185">Reference proteome</keyword>
<keyword id="KW-0949">S-adenosyl-L-methionine</keyword>
<keyword id="KW-0804">Transcription</keyword>
<keyword id="KW-0805">Transcription regulation</keyword>
<keyword id="KW-0808">Transferase</keyword>
<protein>
    <recommendedName>
        <fullName evidence="3">Histone-arginine methyltransferase CARMER</fullName>
        <ecNumber evidence="3">2.1.1.319</ecNumber>
    </recommendedName>
</protein>
<comment type="function">
    <text evidence="3">Methylates (mono- and asymmetric dimethylation) the guanidino nitrogens of arginyl residues in proteins. May methylate histone H3 at 'Arg-17' and activate transcription via chromatin remodeling (By similarity).</text>
</comment>
<comment type="catalytic activity">
    <reaction evidence="3">
        <text>L-arginyl-[protein] + 2 S-adenosyl-L-methionine = N(omega),N(omega)-dimethyl-L-arginyl-[protein] + 2 S-adenosyl-L-homocysteine + 2 H(+)</text>
        <dbReference type="Rhea" id="RHEA:48096"/>
        <dbReference type="Rhea" id="RHEA-COMP:10532"/>
        <dbReference type="Rhea" id="RHEA-COMP:11991"/>
        <dbReference type="ChEBI" id="CHEBI:15378"/>
        <dbReference type="ChEBI" id="CHEBI:29965"/>
        <dbReference type="ChEBI" id="CHEBI:57856"/>
        <dbReference type="ChEBI" id="CHEBI:59789"/>
        <dbReference type="ChEBI" id="CHEBI:61897"/>
        <dbReference type="EC" id="2.1.1.319"/>
    </reaction>
</comment>
<comment type="subunit">
    <text evidence="1">Homodimer.</text>
</comment>
<comment type="subcellular location">
    <subcellularLocation>
        <location evidence="4">Cytoplasm</location>
    </subcellularLocation>
    <subcellularLocation>
        <location evidence="4">Nucleus</location>
    </subcellularLocation>
</comment>
<comment type="PTM">
    <text evidence="1">The dimethylated protein is the major form.</text>
</comment>
<comment type="similarity">
    <text evidence="5">Belongs to the class I-like SAM-binding methyltransferase superfamily. Protein arginine N-methyltransferase family.</text>
</comment>
<name>CARM1_DROMO</name>
<gene>
    <name type="primary">Art4</name>
    <name type="ORF">GI22087</name>
</gene>
<feature type="chain" id="PRO_0000382224" description="Histone-arginine methyltransferase CARMER">
    <location>
        <begin position="1"/>
        <end position="539"/>
    </location>
</feature>
<feature type="domain" description="SAM-dependent MTase PRMT-type" evidence="5">
    <location>
        <begin position="149"/>
        <end position="458"/>
    </location>
</feature>
<feature type="binding site" evidence="2">
    <location>
        <position position="162"/>
    </location>
    <ligand>
        <name>S-adenosyl-L-methionine</name>
        <dbReference type="ChEBI" id="CHEBI:59789"/>
    </ligand>
</feature>
<feature type="binding site" evidence="2">
    <location>
        <position position="171"/>
    </location>
    <ligand>
        <name>S-adenosyl-L-methionine</name>
        <dbReference type="ChEBI" id="CHEBI:59789"/>
    </ligand>
</feature>
<feature type="binding site" evidence="2">
    <location>
        <position position="195"/>
    </location>
    <ligand>
        <name>S-adenosyl-L-methionine</name>
        <dbReference type="ChEBI" id="CHEBI:59789"/>
    </ligand>
</feature>
<feature type="binding site" evidence="2">
    <location>
        <position position="217"/>
    </location>
    <ligand>
        <name>S-adenosyl-L-methionine</name>
        <dbReference type="ChEBI" id="CHEBI:59789"/>
    </ligand>
</feature>
<feature type="binding site" evidence="2">
    <location>
        <position position="246"/>
    </location>
    <ligand>
        <name>S-adenosyl-L-methionine</name>
        <dbReference type="ChEBI" id="CHEBI:59789"/>
    </ligand>
</feature>
<feature type="binding site" evidence="1">
    <location>
        <position position="274"/>
    </location>
    <ligand>
        <name>S-adenosyl-L-methionine</name>
        <dbReference type="ChEBI" id="CHEBI:59789"/>
    </ligand>
</feature>
<feature type="modified residue" description="Asymmetric dimethylarginine; by autocatalysis" evidence="3">
    <location>
        <position position="509"/>
    </location>
</feature>
<dbReference type="EC" id="2.1.1.319" evidence="3"/>
<dbReference type="EMBL" id="CH933806">
    <property type="protein sequence ID" value="EDW16698.1"/>
    <property type="molecule type" value="Genomic_DNA"/>
</dbReference>
<dbReference type="SMR" id="B4KA23"/>
<dbReference type="FunCoup" id="B4KA23">
    <property type="interactions" value="2363"/>
</dbReference>
<dbReference type="EnsemblMetazoa" id="FBtr0172812">
    <property type="protein sequence ID" value="FBpp0171304"/>
    <property type="gene ID" value="FBgn0144816"/>
</dbReference>
<dbReference type="EnsemblMetazoa" id="XM_002001201.3">
    <property type="protein sequence ID" value="XP_002001237.1"/>
    <property type="gene ID" value="LOC6575223"/>
</dbReference>
<dbReference type="GeneID" id="6575223"/>
<dbReference type="CTD" id="420"/>
<dbReference type="eggNOG" id="KOG1500">
    <property type="taxonomic scope" value="Eukaryota"/>
</dbReference>
<dbReference type="HOGENOM" id="CLU_017375_0_1_1"/>
<dbReference type="InParanoid" id="B4KA23"/>
<dbReference type="OMA" id="GIGDGMD"/>
<dbReference type="OrthoDB" id="7848332at2759"/>
<dbReference type="PhylomeDB" id="B4KA23"/>
<dbReference type="Proteomes" id="UP000009192">
    <property type="component" value="Unassembled WGS sequence"/>
</dbReference>
<dbReference type="GO" id="GO:0005737">
    <property type="term" value="C:cytoplasm"/>
    <property type="evidence" value="ECO:0000250"/>
    <property type="project" value="UniProtKB"/>
</dbReference>
<dbReference type="GO" id="GO:0005829">
    <property type="term" value="C:cytosol"/>
    <property type="evidence" value="ECO:0007669"/>
    <property type="project" value="EnsemblMetazoa"/>
</dbReference>
<dbReference type="GO" id="GO:0035097">
    <property type="term" value="C:histone methyltransferase complex"/>
    <property type="evidence" value="ECO:0007669"/>
    <property type="project" value="EnsemblMetazoa"/>
</dbReference>
<dbReference type="GO" id="GO:0005634">
    <property type="term" value="C:nucleus"/>
    <property type="evidence" value="ECO:0000250"/>
    <property type="project" value="UniProtKB"/>
</dbReference>
<dbReference type="GO" id="GO:0035642">
    <property type="term" value="F:histone H3R17 methyltransferase activity"/>
    <property type="evidence" value="ECO:0000250"/>
    <property type="project" value="UniProtKB"/>
</dbReference>
<dbReference type="GO" id="GO:0070611">
    <property type="term" value="F:histone H3R2 methyltransferase activity"/>
    <property type="evidence" value="ECO:0000250"/>
    <property type="project" value="UniProtKB"/>
</dbReference>
<dbReference type="GO" id="GO:0140903">
    <property type="term" value="F:histone H3R26 methyltransferase activity"/>
    <property type="evidence" value="ECO:0000250"/>
    <property type="project" value="UniProtKB"/>
</dbReference>
<dbReference type="GO" id="GO:0035242">
    <property type="term" value="F:protein-arginine omega-N asymmetric methyltransferase activity"/>
    <property type="evidence" value="ECO:0000250"/>
    <property type="project" value="UniProtKB"/>
</dbReference>
<dbReference type="GO" id="GO:0035241">
    <property type="term" value="F:protein-arginine omega-N monomethyltransferase activity"/>
    <property type="evidence" value="ECO:0000250"/>
    <property type="project" value="UniProtKB"/>
</dbReference>
<dbReference type="GO" id="GO:0006338">
    <property type="term" value="P:chromatin remodeling"/>
    <property type="evidence" value="ECO:0000250"/>
    <property type="project" value="UniProtKB"/>
</dbReference>
<dbReference type="GO" id="GO:0019919">
    <property type="term" value="P:peptidyl-arginine methylation, to asymmetrical-dimethyl arginine"/>
    <property type="evidence" value="ECO:0000250"/>
    <property type="project" value="UniProtKB"/>
</dbReference>
<dbReference type="GO" id="GO:0120142">
    <property type="term" value="P:positive regulation of ecdysone receptor signaling pathway"/>
    <property type="evidence" value="ECO:0007669"/>
    <property type="project" value="EnsemblMetazoa"/>
</dbReference>
<dbReference type="GO" id="GO:0045944">
    <property type="term" value="P:positive regulation of transcription by RNA polymerase II"/>
    <property type="evidence" value="ECO:0007669"/>
    <property type="project" value="EnsemblMetazoa"/>
</dbReference>
<dbReference type="GO" id="GO:0006355">
    <property type="term" value="P:regulation of DNA-templated transcription"/>
    <property type="evidence" value="ECO:0000250"/>
    <property type="project" value="UniProtKB"/>
</dbReference>
<dbReference type="CDD" id="cd02440">
    <property type="entry name" value="AdoMet_MTases"/>
    <property type="match status" value="1"/>
</dbReference>
<dbReference type="FunFam" id="2.70.160.11:FF:000002">
    <property type="entry name" value="Probable histone-arginine methyltransferase CARM1"/>
    <property type="match status" value="1"/>
</dbReference>
<dbReference type="FunFam" id="3.40.50.150:FF:000031">
    <property type="entry name" value="Putative Histone-arginine methyltransferase CARM1"/>
    <property type="match status" value="1"/>
</dbReference>
<dbReference type="Gene3D" id="2.70.160.11">
    <property type="entry name" value="Hnrnp arginine n-methyltransferase1"/>
    <property type="match status" value="1"/>
</dbReference>
<dbReference type="Gene3D" id="2.30.29.30">
    <property type="entry name" value="Pleckstrin-homology domain (PH domain)/Phosphotyrosine-binding domain (PTB)"/>
    <property type="match status" value="1"/>
</dbReference>
<dbReference type="Gene3D" id="3.40.50.150">
    <property type="entry name" value="Vaccinia Virus protein VP39"/>
    <property type="match status" value="1"/>
</dbReference>
<dbReference type="InterPro" id="IPR025799">
    <property type="entry name" value="Arg_MeTrfase"/>
</dbReference>
<dbReference type="InterPro" id="IPR011993">
    <property type="entry name" value="PH-like_dom_sf"/>
</dbReference>
<dbReference type="InterPro" id="IPR055135">
    <property type="entry name" value="PRMT_dom"/>
</dbReference>
<dbReference type="InterPro" id="IPR029063">
    <property type="entry name" value="SAM-dependent_MTases_sf"/>
</dbReference>
<dbReference type="PANTHER" id="PTHR11006:SF10">
    <property type="entry name" value="HISTONE-ARGININE METHYLTRANSFERASE CARMER-RELATED"/>
    <property type="match status" value="1"/>
</dbReference>
<dbReference type="PANTHER" id="PTHR11006">
    <property type="entry name" value="PROTEIN ARGININE N-METHYLTRANSFERASE"/>
    <property type="match status" value="1"/>
</dbReference>
<dbReference type="Pfam" id="PF06325">
    <property type="entry name" value="PrmA"/>
    <property type="match status" value="1"/>
</dbReference>
<dbReference type="Pfam" id="PF22528">
    <property type="entry name" value="PRMT_C"/>
    <property type="match status" value="1"/>
</dbReference>
<dbReference type="SUPFAM" id="SSF53335">
    <property type="entry name" value="S-adenosyl-L-methionine-dependent methyltransferases"/>
    <property type="match status" value="1"/>
</dbReference>
<dbReference type="PROSITE" id="PS51678">
    <property type="entry name" value="SAM_MT_PRMT"/>
    <property type="match status" value="1"/>
</dbReference>
<organism>
    <name type="scientific">Drosophila mojavensis</name>
    <name type="common">Fruit fly</name>
    <dbReference type="NCBI Taxonomy" id="7230"/>
    <lineage>
        <taxon>Eukaryota</taxon>
        <taxon>Metazoa</taxon>
        <taxon>Ecdysozoa</taxon>
        <taxon>Arthropoda</taxon>
        <taxon>Hexapoda</taxon>
        <taxon>Insecta</taxon>
        <taxon>Pterygota</taxon>
        <taxon>Neoptera</taxon>
        <taxon>Endopterygota</taxon>
        <taxon>Diptera</taxon>
        <taxon>Brachycera</taxon>
        <taxon>Muscomorpha</taxon>
        <taxon>Ephydroidea</taxon>
        <taxon>Drosophilidae</taxon>
        <taxon>Drosophila</taxon>
    </lineage>
</organism>
<proteinExistence type="inferred from homology"/>
<reference evidence="6" key="1">
    <citation type="journal article" date="2007" name="Nature">
        <title>Evolution of genes and genomes on the Drosophila phylogeny.</title>
        <authorList>
            <consortium name="Drosophila 12 genomes consortium"/>
        </authorList>
    </citation>
    <scope>NUCLEOTIDE SEQUENCE [LARGE SCALE GENOMIC DNA]</scope>
    <source>
        <strain evidence="6">Tucson 15081-1352.22</strain>
    </source>
</reference>
<evidence type="ECO:0000250" key="1"/>
<evidence type="ECO:0000250" key="2">
    <source>
        <dbReference type="UniProtKB" id="Q63009"/>
    </source>
</evidence>
<evidence type="ECO:0000250" key="3">
    <source>
        <dbReference type="UniProtKB" id="Q7Q2B7"/>
    </source>
</evidence>
<evidence type="ECO:0000250" key="4">
    <source>
        <dbReference type="UniProtKB" id="Q9VH48"/>
    </source>
</evidence>
<evidence type="ECO:0000255" key="5">
    <source>
        <dbReference type="PROSITE-ProRule" id="PRU01015"/>
    </source>
</evidence>
<evidence type="ECO:0000312" key="6">
    <source>
        <dbReference type="EMBL" id="EDW16698.1"/>
    </source>
</evidence>
<sequence length="539" mass="60750">MSTTSSSGRIAADQNNKCVNSVAAALCPLSNCQFSGVVISAITDEQKLEFSNKYNSSCTLSCSYDSQGVLLRIMLDNDQGHVLKEYMISADTDAAQLGRRCYAISLESDNLVLRFVSDKDQQLFRKVVENVKHLRPKSVFSQRTEESSASQYFQFYGYLSQQQNMMQDYVRTSTYQRAILGNAIDFQDKVVLDVGAGSGILSFFAVQAGAAKVYAIEASNMAQYAQQLVESNNVQHKISVIPGKIEEIELPEKVDVIISEPMGYMLYNERMLETYLHARKWLKPHGKMYPTHGDLHIAPFSDESLYSEQYNKANFWYQSAFHGVDLTTLHKEGMKEYFRQPIVDTFDIRICMAKSVRHVCDFLNDKEDDLHVIDIPLEFHILQTGICHGLAFWFDVEFSGSSQNVWLSTSPTAPLTHWYQVRCLLPMPIFIKQGQTLTGRVLLEANRRQSYDVTIDLHIEGTLISSSNTLDLKNPYFRYTGAPVQAPPGTNTQSPSEQYWTQMDTQGNRNSNSMLNGTLSVNGMGDGSMDITHGLLHPH</sequence>